<feature type="chain" id="PRO_0000237868" description="Shikimate kinase">
    <location>
        <begin position="1"/>
        <end position="185"/>
    </location>
</feature>
<feature type="binding site" evidence="1">
    <location>
        <begin position="12"/>
        <end position="17"/>
    </location>
    <ligand>
        <name>ATP</name>
        <dbReference type="ChEBI" id="CHEBI:30616"/>
    </ligand>
</feature>
<feature type="binding site" evidence="1">
    <location>
        <position position="16"/>
    </location>
    <ligand>
        <name>Mg(2+)</name>
        <dbReference type="ChEBI" id="CHEBI:18420"/>
    </ligand>
</feature>
<feature type="binding site" evidence="1">
    <location>
        <position position="34"/>
    </location>
    <ligand>
        <name>substrate</name>
    </ligand>
</feature>
<feature type="binding site" evidence="1">
    <location>
        <position position="58"/>
    </location>
    <ligand>
        <name>substrate</name>
    </ligand>
</feature>
<feature type="binding site" evidence="1">
    <location>
        <position position="79"/>
    </location>
    <ligand>
        <name>substrate</name>
    </ligand>
</feature>
<feature type="binding site" evidence="1">
    <location>
        <position position="116"/>
    </location>
    <ligand>
        <name>ATP</name>
        <dbReference type="ChEBI" id="CHEBI:30616"/>
    </ligand>
</feature>
<feature type="binding site" evidence="1">
    <location>
        <position position="135"/>
    </location>
    <ligand>
        <name>substrate</name>
    </ligand>
</feature>
<evidence type="ECO:0000255" key="1">
    <source>
        <dbReference type="HAMAP-Rule" id="MF_00109"/>
    </source>
</evidence>
<name>AROK_CORJK</name>
<accession>Q4JVG1</accession>
<keyword id="KW-0028">Amino-acid biosynthesis</keyword>
<keyword id="KW-0057">Aromatic amino acid biosynthesis</keyword>
<keyword id="KW-0067">ATP-binding</keyword>
<keyword id="KW-0963">Cytoplasm</keyword>
<keyword id="KW-0418">Kinase</keyword>
<keyword id="KW-0460">Magnesium</keyword>
<keyword id="KW-0479">Metal-binding</keyword>
<keyword id="KW-0547">Nucleotide-binding</keyword>
<keyword id="KW-1185">Reference proteome</keyword>
<keyword id="KW-0808">Transferase</keyword>
<proteinExistence type="inferred from homology"/>
<reference key="1">
    <citation type="journal article" date="2005" name="J. Bacteriol.">
        <title>Complete genome sequence and analysis of the multiresistant nosocomial pathogen Corynebacterium jeikeium K411, a lipid-requiring bacterium of the human skin flora.</title>
        <authorList>
            <person name="Tauch A."/>
            <person name="Kaiser O."/>
            <person name="Hain T."/>
            <person name="Goesmann A."/>
            <person name="Weisshaar B."/>
            <person name="Albersmeier A."/>
            <person name="Bekel T."/>
            <person name="Bischoff N."/>
            <person name="Brune I."/>
            <person name="Chakraborty T."/>
            <person name="Kalinowski J."/>
            <person name="Meyer F."/>
            <person name="Rupp O."/>
            <person name="Schneiker S."/>
            <person name="Viehoever P."/>
            <person name="Puehler A."/>
        </authorList>
    </citation>
    <scope>NUCLEOTIDE SEQUENCE [LARGE SCALE GENOMIC DNA]</scope>
    <source>
        <strain>K411</strain>
    </source>
</reference>
<protein>
    <recommendedName>
        <fullName evidence="1">Shikimate kinase</fullName>
        <shortName evidence="1">SK</shortName>
        <ecNumber evidence="1">2.7.1.71</ecNumber>
    </recommendedName>
</protein>
<gene>
    <name evidence="1" type="primary">aroK</name>
    <name type="ordered locus">jk1032</name>
</gene>
<sequence length="185" mass="20362">MSPRAVLVGLPGSGKTTIGKRLANALNLQLVDTDHMLEKKLGKTCNQIMGELGEPAFREQEAIVVAEALQTDGIVSLGGGAVVTESTRELLADHTVVYLNVSIDEGVRRTSGSNTRPLLNVADPRGKYAQLFAQRSAFYEEVSNFMVRCDGKEPRRVVTDILSFIEEVRLERLTERDASHQIRPQ</sequence>
<comment type="function">
    <text evidence="1">Catalyzes the specific phosphorylation of the 3-hydroxyl group of shikimic acid using ATP as a cosubstrate.</text>
</comment>
<comment type="catalytic activity">
    <reaction evidence="1">
        <text>shikimate + ATP = 3-phosphoshikimate + ADP + H(+)</text>
        <dbReference type="Rhea" id="RHEA:13121"/>
        <dbReference type="ChEBI" id="CHEBI:15378"/>
        <dbReference type="ChEBI" id="CHEBI:30616"/>
        <dbReference type="ChEBI" id="CHEBI:36208"/>
        <dbReference type="ChEBI" id="CHEBI:145989"/>
        <dbReference type="ChEBI" id="CHEBI:456216"/>
        <dbReference type="EC" id="2.7.1.71"/>
    </reaction>
</comment>
<comment type="cofactor">
    <cofactor evidence="1">
        <name>Mg(2+)</name>
        <dbReference type="ChEBI" id="CHEBI:18420"/>
    </cofactor>
    <text evidence="1">Binds 1 Mg(2+) ion per subunit.</text>
</comment>
<comment type="pathway">
    <text evidence="1">Metabolic intermediate biosynthesis; chorismate biosynthesis; chorismate from D-erythrose 4-phosphate and phosphoenolpyruvate: step 5/7.</text>
</comment>
<comment type="subunit">
    <text evidence="1">Monomer.</text>
</comment>
<comment type="subcellular location">
    <subcellularLocation>
        <location evidence="1">Cytoplasm</location>
    </subcellularLocation>
</comment>
<comment type="similarity">
    <text evidence="1">Belongs to the shikimate kinase family.</text>
</comment>
<organism>
    <name type="scientific">Corynebacterium jeikeium (strain K411)</name>
    <dbReference type="NCBI Taxonomy" id="306537"/>
    <lineage>
        <taxon>Bacteria</taxon>
        <taxon>Bacillati</taxon>
        <taxon>Actinomycetota</taxon>
        <taxon>Actinomycetes</taxon>
        <taxon>Mycobacteriales</taxon>
        <taxon>Corynebacteriaceae</taxon>
        <taxon>Corynebacterium</taxon>
    </lineage>
</organism>
<dbReference type="EC" id="2.7.1.71" evidence="1"/>
<dbReference type="EMBL" id="CR931997">
    <property type="protein sequence ID" value="CAI37196.1"/>
    <property type="molecule type" value="Genomic_DNA"/>
</dbReference>
<dbReference type="RefSeq" id="WP_011273601.1">
    <property type="nucleotide sequence ID" value="NC_007164.1"/>
</dbReference>
<dbReference type="SMR" id="Q4JVG1"/>
<dbReference type="STRING" id="306537.jk1032"/>
<dbReference type="KEGG" id="cjk:jk1032"/>
<dbReference type="PATRIC" id="fig|306537.10.peg.1044"/>
<dbReference type="eggNOG" id="COG0703">
    <property type="taxonomic scope" value="Bacteria"/>
</dbReference>
<dbReference type="HOGENOM" id="CLU_057607_3_3_11"/>
<dbReference type="OrthoDB" id="9800332at2"/>
<dbReference type="UniPathway" id="UPA00053">
    <property type="reaction ID" value="UER00088"/>
</dbReference>
<dbReference type="Proteomes" id="UP000000545">
    <property type="component" value="Chromosome"/>
</dbReference>
<dbReference type="GO" id="GO:0005829">
    <property type="term" value="C:cytosol"/>
    <property type="evidence" value="ECO:0007669"/>
    <property type="project" value="TreeGrafter"/>
</dbReference>
<dbReference type="GO" id="GO:0005524">
    <property type="term" value="F:ATP binding"/>
    <property type="evidence" value="ECO:0007669"/>
    <property type="project" value="UniProtKB-UniRule"/>
</dbReference>
<dbReference type="GO" id="GO:0000287">
    <property type="term" value="F:magnesium ion binding"/>
    <property type="evidence" value="ECO:0007669"/>
    <property type="project" value="UniProtKB-UniRule"/>
</dbReference>
<dbReference type="GO" id="GO:0004765">
    <property type="term" value="F:shikimate kinase activity"/>
    <property type="evidence" value="ECO:0007669"/>
    <property type="project" value="UniProtKB-UniRule"/>
</dbReference>
<dbReference type="GO" id="GO:0008652">
    <property type="term" value="P:amino acid biosynthetic process"/>
    <property type="evidence" value="ECO:0007669"/>
    <property type="project" value="UniProtKB-KW"/>
</dbReference>
<dbReference type="GO" id="GO:0009073">
    <property type="term" value="P:aromatic amino acid family biosynthetic process"/>
    <property type="evidence" value="ECO:0007669"/>
    <property type="project" value="UniProtKB-KW"/>
</dbReference>
<dbReference type="GO" id="GO:0009423">
    <property type="term" value="P:chorismate biosynthetic process"/>
    <property type="evidence" value="ECO:0007669"/>
    <property type="project" value="UniProtKB-UniRule"/>
</dbReference>
<dbReference type="CDD" id="cd00464">
    <property type="entry name" value="SK"/>
    <property type="match status" value="1"/>
</dbReference>
<dbReference type="Gene3D" id="3.40.50.300">
    <property type="entry name" value="P-loop containing nucleotide triphosphate hydrolases"/>
    <property type="match status" value="1"/>
</dbReference>
<dbReference type="HAMAP" id="MF_00109">
    <property type="entry name" value="Shikimate_kinase"/>
    <property type="match status" value="1"/>
</dbReference>
<dbReference type="InterPro" id="IPR027417">
    <property type="entry name" value="P-loop_NTPase"/>
</dbReference>
<dbReference type="InterPro" id="IPR031322">
    <property type="entry name" value="Shikimate/glucono_kinase"/>
</dbReference>
<dbReference type="InterPro" id="IPR000623">
    <property type="entry name" value="Shikimate_kinase/TSH1"/>
</dbReference>
<dbReference type="InterPro" id="IPR023000">
    <property type="entry name" value="Shikimate_kinase_CS"/>
</dbReference>
<dbReference type="PANTHER" id="PTHR21087">
    <property type="entry name" value="SHIKIMATE KINASE"/>
    <property type="match status" value="1"/>
</dbReference>
<dbReference type="PANTHER" id="PTHR21087:SF16">
    <property type="entry name" value="SHIKIMATE KINASE 1, CHLOROPLASTIC"/>
    <property type="match status" value="1"/>
</dbReference>
<dbReference type="Pfam" id="PF01202">
    <property type="entry name" value="SKI"/>
    <property type="match status" value="1"/>
</dbReference>
<dbReference type="PRINTS" id="PR01100">
    <property type="entry name" value="SHIKIMTKNASE"/>
</dbReference>
<dbReference type="SUPFAM" id="SSF52540">
    <property type="entry name" value="P-loop containing nucleoside triphosphate hydrolases"/>
    <property type="match status" value="1"/>
</dbReference>
<dbReference type="PROSITE" id="PS01128">
    <property type="entry name" value="SHIKIMATE_KINASE"/>
    <property type="match status" value="1"/>
</dbReference>